<accession>O34305</accession>
<accession>Q795T0</accession>
<proteinExistence type="evidence at protein level"/>
<feature type="chain" id="PRO_0000375827" description="Uncharacterized protein YtoQ">
    <location>
        <begin position="1"/>
        <end position="148"/>
    </location>
</feature>
<sequence length="148" mass="16791">MEFIVYLAGEIHSNWREEIKEKTKSLKLPITFVGPMENHDRSDNIGEEIMGVQPNAVLKDDKASDINNFRTAVLMNKADFVIALFGEKYKQWNTAMDASYAIAKGKPLIIIRPESLHHPLKELSNKANITVETVNQAIKALSYLFETE</sequence>
<organism>
    <name type="scientific">Bacillus subtilis (strain 168)</name>
    <dbReference type="NCBI Taxonomy" id="224308"/>
    <lineage>
        <taxon>Bacteria</taxon>
        <taxon>Bacillati</taxon>
        <taxon>Bacillota</taxon>
        <taxon>Bacilli</taxon>
        <taxon>Bacillales</taxon>
        <taxon>Bacillaceae</taxon>
        <taxon>Bacillus</taxon>
    </lineage>
</organism>
<name>YTOQ_BACSU</name>
<gene>
    <name type="primary">ytoQ</name>
    <name type="ordered locus">BSU29850</name>
</gene>
<dbReference type="EMBL" id="AF008220">
    <property type="protein sequence ID" value="AAC00393.1"/>
    <property type="molecule type" value="Genomic_DNA"/>
</dbReference>
<dbReference type="EMBL" id="AL009126">
    <property type="protein sequence ID" value="CAB14963.1"/>
    <property type="molecule type" value="Genomic_DNA"/>
</dbReference>
<dbReference type="PIR" id="C69998">
    <property type="entry name" value="C69998"/>
</dbReference>
<dbReference type="RefSeq" id="NP_390863.1">
    <property type="nucleotide sequence ID" value="NC_000964.3"/>
</dbReference>
<dbReference type="RefSeq" id="WP_003229263.1">
    <property type="nucleotide sequence ID" value="NZ_OZ025638.1"/>
</dbReference>
<dbReference type="PDB" id="8OF6">
    <property type="method" value="X-ray"/>
    <property type="resolution" value="2.10 A"/>
    <property type="chains" value="A/B/C/D/E/F/G/H/I/J/K/L/M/N/O/P=1-148"/>
</dbReference>
<dbReference type="PDBsum" id="8OF6"/>
<dbReference type="SMR" id="O34305"/>
<dbReference type="FunCoup" id="O34305">
    <property type="interactions" value="35"/>
</dbReference>
<dbReference type="STRING" id="224308.BSU29850"/>
<dbReference type="PaxDb" id="224308-BSU29850"/>
<dbReference type="DNASU" id="937302"/>
<dbReference type="EnsemblBacteria" id="CAB14963">
    <property type="protein sequence ID" value="CAB14963"/>
    <property type="gene ID" value="BSU_29850"/>
</dbReference>
<dbReference type="GeneID" id="937302"/>
<dbReference type="KEGG" id="bsu:BSU29850"/>
<dbReference type="PATRIC" id="fig|224308.179.peg.3243"/>
<dbReference type="eggNOG" id="ENOG502ZBQD">
    <property type="taxonomic scope" value="Bacteria"/>
</dbReference>
<dbReference type="InParanoid" id="O34305"/>
<dbReference type="OrthoDB" id="979989at2"/>
<dbReference type="PhylomeDB" id="O34305"/>
<dbReference type="BioCyc" id="BSUB:BSU29850-MONOMER"/>
<dbReference type="Proteomes" id="UP000001570">
    <property type="component" value="Chromosome"/>
</dbReference>
<dbReference type="Gene3D" id="3.40.50.450">
    <property type="match status" value="1"/>
</dbReference>
<dbReference type="InterPro" id="IPR019884">
    <property type="entry name" value="YtoQ_family_protein"/>
</dbReference>
<dbReference type="NCBIfam" id="TIGR03646">
    <property type="entry name" value="YtoQ_fam"/>
    <property type="match status" value="1"/>
</dbReference>
<dbReference type="Pfam" id="PF11071">
    <property type="entry name" value="Nuc_deoxyri_tr3"/>
    <property type="match status" value="1"/>
</dbReference>
<reference key="1">
    <citation type="journal article" date="1997" name="Microbiology">
        <title>Sequencing and functional annotation of the Bacillus subtilis genes in the 200 kb rrnB-dnaB region.</title>
        <authorList>
            <person name="Lapidus A."/>
            <person name="Galleron N."/>
            <person name="Sorokin A."/>
            <person name="Ehrlich S.D."/>
        </authorList>
    </citation>
    <scope>NUCLEOTIDE SEQUENCE [GENOMIC DNA]</scope>
    <source>
        <strain>168</strain>
    </source>
</reference>
<reference key="2">
    <citation type="journal article" date="1997" name="Nature">
        <title>The complete genome sequence of the Gram-positive bacterium Bacillus subtilis.</title>
        <authorList>
            <person name="Kunst F."/>
            <person name="Ogasawara N."/>
            <person name="Moszer I."/>
            <person name="Albertini A.M."/>
            <person name="Alloni G."/>
            <person name="Azevedo V."/>
            <person name="Bertero M.G."/>
            <person name="Bessieres P."/>
            <person name="Bolotin A."/>
            <person name="Borchert S."/>
            <person name="Borriss R."/>
            <person name="Boursier L."/>
            <person name="Brans A."/>
            <person name="Braun M."/>
            <person name="Brignell S.C."/>
            <person name="Bron S."/>
            <person name="Brouillet S."/>
            <person name="Bruschi C.V."/>
            <person name="Caldwell B."/>
            <person name="Capuano V."/>
            <person name="Carter N.M."/>
            <person name="Choi S.-K."/>
            <person name="Codani J.-J."/>
            <person name="Connerton I.F."/>
            <person name="Cummings N.J."/>
            <person name="Daniel R.A."/>
            <person name="Denizot F."/>
            <person name="Devine K.M."/>
            <person name="Duesterhoeft A."/>
            <person name="Ehrlich S.D."/>
            <person name="Emmerson P.T."/>
            <person name="Entian K.-D."/>
            <person name="Errington J."/>
            <person name="Fabret C."/>
            <person name="Ferrari E."/>
            <person name="Foulger D."/>
            <person name="Fritz C."/>
            <person name="Fujita M."/>
            <person name="Fujita Y."/>
            <person name="Fuma S."/>
            <person name="Galizzi A."/>
            <person name="Galleron N."/>
            <person name="Ghim S.-Y."/>
            <person name="Glaser P."/>
            <person name="Goffeau A."/>
            <person name="Golightly E.J."/>
            <person name="Grandi G."/>
            <person name="Guiseppi G."/>
            <person name="Guy B.J."/>
            <person name="Haga K."/>
            <person name="Haiech J."/>
            <person name="Harwood C.R."/>
            <person name="Henaut A."/>
            <person name="Hilbert H."/>
            <person name="Holsappel S."/>
            <person name="Hosono S."/>
            <person name="Hullo M.-F."/>
            <person name="Itaya M."/>
            <person name="Jones L.-M."/>
            <person name="Joris B."/>
            <person name="Karamata D."/>
            <person name="Kasahara Y."/>
            <person name="Klaerr-Blanchard M."/>
            <person name="Klein C."/>
            <person name="Kobayashi Y."/>
            <person name="Koetter P."/>
            <person name="Koningstein G."/>
            <person name="Krogh S."/>
            <person name="Kumano M."/>
            <person name="Kurita K."/>
            <person name="Lapidus A."/>
            <person name="Lardinois S."/>
            <person name="Lauber J."/>
            <person name="Lazarevic V."/>
            <person name="Lee S.-M."/>
            <person name="Levine A."/>
            <person name="Liu H."/>
            <person name="Masuda S."/>
            <person name="Mauel C."/>
            <person name="Medigue C."/>
            <person name="Medina N."/>
            <person name="Mellado R.P."/>
            <person name="Mizuno M."/>
            <person name="Moestl D."/>
            <person name="Nakai S."/>
            <person name="Noback M."/>
            <person name="Noone D."/>
            <person name="O'Reilly M."/>
            <person name="Ogawa K."/>
            <person name="Ogiwara A."/>
            <person name="Oudega B."/>
            <person name="Park S.-H."/>
            <person name="Parro V."/>
            <person name="Pohl T.M."/>
            <person name="Portetelle D."/>
            <person name="Porwollik S."/>
            <person name="Prescott A.M."/>
            <person name="Presecan E."/>
            <person name="Pujic P."/>
            <person name="Purnelle B."/>
            <person name="Rapoport G."/>
            <person name="Rey M."/>
            <person name="Reynolds S."/>
            <person name="Rieger M."/>
            <person name="Rivolta C."/>
            <person name="Rocha E."/>
            <person name="Roche B."/>
            <person name="Rose M."/>
            <person name="Sadaie Y."/>
            <person name="Sato T."/>
            <person name="Scanlan E."/>
            <person name="Schleich S."/>
            <person name="Schroeter R."/>
            <person name="Scoffone F."/>
            <person name="Sekiguchi J."/>
            <person name="Sekowska A."/>
            <person name="Seror S.J."/>
            <person name="Serror P."/>
            <person name="Shin B.-S."/>
            <person name="Soldo B."/>
            <person name="Sorokin A."/>
            <person name="Tacconi E."/>
            <person name="Takagi T."/>
            <person name="Takahashi H."/>
            <person name="Takemaru K."/>
            <person name="Takeuchi M."/>
            <person name="Tamakoshi A."/>
            <person name="Tanaka T."/>
            <person name="Terpstra P."/>
            <person name="Tognoni A."/>
            <person name="Tosato V."/>
            <person name="Uchiyama S."/>
            <person name="Vandenbol M."/>
            <person name="Vannier F."/>
            <person name="Vassarotti A."/>
            <person name="Viari A."/>
            <person name="Wambutt R."/>
            <person name="Wedler E."/>
            <person name="Wedler H."/>
            <person name="Weitzenegger T."/>
            <person name="Winters P."/>
            <person name="Wipat A."/>
            <person name="Yamamoto H."/>
            <person name="Yamane K."/>
            <person name="Yasumoto K."/>
            <person name="Yata K."/>
            <person name="Yoshida K."/>
            <person name="Yoshikawa H.-F."/>
            <person name="Zumstein E."/>
            <person name="Yoshikawa H."/>
            <person name="Danchin A."/>
        </authorList>
    </citation>
    <scope>NUCLEOTIDE SEQUENCE [LARGE SCALE GENOMIC DNA]</scope>
    <source>
        <strain>168</strain>
    </source>
</reference>
<protein>
    <recommendedName>
        <fullName>Uncharacterized protein YtoQ</fullName>
    </recommendedName>
</protein>
<keyword id="KW-0002">3D-structure</keyword>
<keyword id="KW-1185">Reference proteome</keyword>